<feature type="chain" id="PRO_0000263508" description="Elongation factor G 2">
    <location>
        <begin position="1"/>
        <end position="697"/>
    </location>
</feature>
<feature type="domain" description="tr-type G">
    <location>
        <begin position="5"/>
        <end position="280"/>
    </location>
</feature>
<feature type="binding site" evidence="1">
    <location>
        <begin position="14"/>
        <end position="21"/>
    </location>
    <ligand>
        <name>GTP</name>
        <dbReference type="ChEBI" id="CHEBI:37565"/>
    </ligand>
</feature>
<feature type="binding site" evidence="1">
    <location>
        <begin position="78"/>
        <end position="82"/>
    </location>
    <ligand>
        <name>GTP</name>
        <dbReference type="ChEBI" id="CHEBI:37565"/>
    </ligand>
</feature>
<feature type="binding site" evidence="1">
    <location>
        <begin position="132"/>
        <end position="135"/>
    </location>
    <ligand>
        <name>GTP</name>
        <dbReference type="ChEBI" id="CHEBI:37565"/>
    </ligand>
</feature>
<proteinExistence type="inferred from homology"/>
<name>EFG2_SHESM</name>
<dbReference type="EMBL" id="CP000446">
    <property type="protein sequence ID" value="ABI37778.1"/>
    <property type="molecule type" value="Genomic_DNA"/>
</dbReference>
<dbReference type="RefSeq" id="WP_011621495.1">
    <property type="nucleotide sequence ID" value="NC_008321.1"/>
</dbReference>
<dbReference type="SMR" id="Q0HMD9"/>
<dbReference type="KEGG" id="she:Shewmr4_0698"/>
<dbReference type="HOGENOM" id="CLU_002794_4_2_6"/>
<dbReference type="GO" id="GO:0005737">
    <property type="term" value="C:cytoplasm"/>
    <property type="evidence" value="ECO:0007669"/>
    <property type="project" value="UniProtKB-SubCell"/>
</dbReference>
<dbReference type="GO" id="GO:0005525">
    <property type="term" value="F:GTP binding"/>
    <property type="evidence" value="ECO:0007669"/>
    <property type="project" value="UniProtKB-UniRule"/>
</dbReference>
<dbReference type="GO" id="GO:0003924">
    <property type="term" value="F:GTPase activity"/>
    <property type="evidence" value="ECO:0007669"/>
    <property type="project" value="InterPro"/>
</dbReference>
<dbReference type="GO" id="GO:0097216">
    <property type="term" value="F:guanosine tetraphosphate binding"/>
    <property type="evidence" value="ECO:0007669"/>
    <property type="project" value="UniProtKB-ARBA"/>
</dbReference>
<dbReference type="GO" id="GO:0003746">
    <property type="term" value="F:translation elongation factor activity"/>
    <property type="evidence" value="ECO:0007669"/>
    <property type="project" value="UniProtKB-UniRule"/>
</dbReference>
<dbReference type="GO" id="GO:0032790">
    <property type="term" value="P:ribosome disassembly"/>
    <property type="evidence" value="ECO:0007669"/>
    <property type="project" value="TreeGrafter"/>
</dbReference>
<dbReference type="CDD" id="cd01886">
    <property type="entry name" value="EF-G"/>
    <property type="match status" value="1"/>
</dbReference>
<dbReference type="CDD" id="cd16262">
    <property type="entry name" value="EFG_III"/>
    <property type="match status" value="1"/>
</dbReference>
<dbReference type="CDD" id="cd01434">
    <property type="entry name" value="EFG_mtEFG1_IV"/>
    <property type="match status" value="1"/>
</dbReference>
<dbReference type="CDD" id="cd03713">
    <property type="entry name" value="EFG_mtEFG_C"/>
    <property type="match status" value="1"/>
</dbReference>
<dbReference type="CDD" id="cd04088">
    <property type="entry name" value="EFG_mtEFG_II"/>
    <property type="match status" value="1"/>
</dbReference>
<dbReference type="FunFam" id="2.40.30.10:FF:000006">
    <property type="entry name" value="Elongation factor G"/>
    <property type="match status" value="1"/>
</dbReference>
<dbReference type="FunFam" id="3.30.230.10:FF:000003">
    <property type="entry name" value="Elongation factor G"/>
    <property type="match status" value="1"/>
</dbReference>
<dbReference type="FunFam" id="3.30.70.240:FF:000001">
    <property type="entry name" value="Elongation factor G"/>
    <property type="match status" value="1"/>
</dbReference>
<dbReference type="FunFam" id="3.30.70.870:FF:000006">
    <property type="entry name" value="Elongation factor G"/>
    <property type="match status" value="1"/>
</dbReference>
<dbReference type="FunFam" id="3.40.50.300:FF:000029">
    <property type="entry name" value="Elongation factor G"/>
    <property type="match status" value="1"/>
</dbReference>
<dbReference type="Gene3D" id="3.30.230.10">
    <property type="match status" value="1"/>
</dbReference>
<dbReference type="Gene3D" id="3.30.70.240">
    <property type="match status" value="1"/>
</dbReference>
<dbReference type="Gene3D" id="3.30.70.870">
    <property type="entry name" value="Elongation Factor G (Translational Gtpase), domain 3"/>
    <property type="match status" value="1"/>
</dbReference>
<dbReference type="Gene3D" id="3.40.50.300">
    <property type="entry name" value="P-loop containing nucleotide triphosphate hydrolases"/>
    <property type="match status" value="1"/>
</dbReference>
<dbReference type="Gene3D" id="2.40.30.10">
    <property type="entry name" value="Translation factors"/>
    <property type="match status" value="1"/>
</dbReference>
<dbReference type="HAMAP" id="MF_00054_B">
    <property type="entry name" value="EF_G_EF_2_B"/>
    <property type="match status" value="1"/>
</dbReference>
<dbReference type="InterPro" id="IPR041095">
    <property type="entry name" value="EFG_II"/>
</dbReference>
<dbReference type="InterPro" id="IPR009022">
    <property type="entry name" value="EFG_III"/>
</dbReference>
<dbReference type="InterPro" id="IPR035647">
    <property type="entry name" value="EFG_III/V"/>
</dbReference>
<dbReference type="InterPro" id="IPR047872">
    <property type="entry name" value="EFG_IV"/>
</dbReference>
<dbReference type="InterPro" id="IPR035649">
    <property type="entry name" value="EFG_V"/>
</dbReference>
<dbReference type="InterPro" id="IPR000640">
    <property type="entry name" value="EFG_V-like"/>
</dbReference>
<dbReference type="InterPro" id="IPR004161">
    <property type="entry name" value="EFTu-like_2"/>
</dbReference>
<dbReference type="InterPro" id="IPR031157">
    <property type="entry name" value="G_TR_CS"/>
</dbReference>
<dbReference type="InterPro" id="IPR027417">
    <property type="entry name" value="P-loop_NTPase"/>
</dbReference>
<dbReference type="InterPro" id="IPR020568">
    <property type="entry name" value="Ribosomal_Su5_D2-typ_SF"/>
</dbReference>
<dbReference type="InterPro" id="IPR014721">
    <property type="entry name" value="Ribsml_uS5_D2-typ_fold_subgr"/>
</dbReference>
<dbReference type="InterPro" id="IPR005225">
    <property type="entry name" value="Small_GTP-bd"/>
</dbReference>
<dbReference type="InterPro" id="IPR000795">
    <property type="entry name" value="T_Tr_GTP-bd_dom"/>
</dbReference>
<dbReference type="InterPro" id="IPR009000">
    <property type="entry name" value="Transl_B-barrel_sf"/>
</dbReference>
<dbReference type="InterPro" id="IPR004540">
    <property type="entry name" value="Transl_elong_EFG/EF2"/>
</dbReference>
<dbReference type="InterPro" id="IPR005517">
    <property type="entry name" value="Transl_elong_EFG/EF2_IV"/>
</dbReference>
<dbReference type="NCBIfam" id="TIGR00484">
    <property type="entry name" value="EF-G"/>
    <property type="match status" value="1"/>
</dbReference>
<dbReference type="NCBIfam" id="NF009381">
    <property type="entry name" value="PRK12740.1-5"/>
    <property type="match status" value="1"/>
</dbReference>
<dbReference type="NCBIfam" id="TIGR00231">
    <property type="entry name" value="small_GTP"/>
    <property type="match status" value="1"/>
</dbReference>
<dbReference type="PANTHER" id="PTHR43261:SF5">
    <property type="entry name" value="ELONGATION FACTOR G 1"/>
    <property type="match status" value="1"/>
</dbReference>
<dbReference type="PANTHER" id="PTHR43261">
    <property type="entry name" value="TRANSLATION ELONGATION FACTOR G-RELATED"/>
    <property type="match status" value="1"/>
</dbReference>
<dbReference type="Pfam" id="PF00679">
    <property type="entry name" value="EFG_C"/>
    <property type="match status" value="1"/>
</dbReference>
<dbReference type="Pfam" id="PF14492">
    <property type="entry name" value="EFG_III"/>
    <property type="match status" value="1"/>
</dbReference>
<dbReference type="Pfam" id="PF03764">
    <property type="entry name" value="EFG_IV"/>
    <property type="match status" value="1"/>
</dbReference>
<dbReference type="Pfam" id="PF00009">
    <property type="entry name" value="GTP_EFTU"/>
    <property type="match status" value="1"/>
</dbReference>
<dbReference type="Pfam" id="PF03144">
    <property type="entry name" value="GTP_EFTU_D2"/>
    <property type="match status" value="1"/>
</dbReference>
<dbReference type="PRINTS" id="PR00315">
    <property type="entry name" value="ELONGATNFCT"/>
</dbReference>
<dbReference type="SMART" id="SM00838">
    <property type="entry name" value="EFG_C"/>
    <property type="match status" value="1"/>
</dbReference>
<dbReference type="SMART" id="SM00889">
    <property type="entry name" value="EFG_IV"/>
    <property type="match status" value="1"/>
</dbReference>
<dbReference type="SUPFAM" id="SSF54980">
    <property type="entry name" value="EF-G C-terminal domain-like"/>
    <property type="match status" value="2"/>
</dbReference>
<dbReference type="SUPFAM" id="SSF52540">
    <property type="entry name" value="P-loop containing nucleoside triphosphate hydrolases"/>
    <property type="match status" value="1"/>
</dbReference>
<dbReference type="SUPFAM" id="SSF54211">
    <property type="entry name" value="Ribosomal protein S5 domain 2-like"/>
    <property type="match status" value="1"/>
</dbReference>
<dbReference type="SUPFAM" id="SSF50447">
    <property type="entry name" value="Translation proteins"/>
    <property type="match status" value="1"/>
</dbReference>
<dbReference type="PROSITE" id="PS00301">
    <property type="entry name" value="G_TR_1"/>
    <property type="match status" value="1"/>
</dbReference>
<dbReference type="PROSITE" id="PS51722">
    <property type="entry name" value="G_TR_2"/>
    <property type="match status" value="1"/>
</dbReference>
<organism>
    <name type="scientific">Shewanella sp. (strain MR-4)</name>
    <dbReference type="NCBI Taxonomy" id="60480"/>
    <lineage>
        <taxon>Bacteria</taxon>
        <taxon>Pseudomonadati</taxon>
        <taxon>Pseudomonadota</taxon>
        <taxon>Gammaproteobacteria</taxon>
        <taxon>Alteromonadales</taxon>
        <taxon>Shewanellaceae</taxon>
        <taxon>Shewanella</taxon>
    </lineage>
</organism>
<gene>
    <name evidence="1" type="primary">fusA2</name>
    <name type="ordered locus">Shewmr4_0698</name>
</gene>
<sequence length="697" mass="76813">MTELSKYRNIGIFAHVDAGKTTTTERILKLTGRIHKAGETHDGESTTDFMVQEAERGITIQSAAVSCFWKDHRFNVIDTPGHVDFTVEVYRSLKVLDGGIAVFCGSGGVEPQSETNWRYANESEVARIIFVNKLDRMGADFLRVVKQTKDVLAATPLVMVLPIGIEDEFKGVVDLLTRQAYVWDETGLPENYSIQEIPADMVDLVEEYREQLIETAVEQDDDLMEAYMEGEEPSIEDLKRCIRKGTRTMAFFPTFCGSAFKNKGMQLVLDAVVDYLPAPNEVDPQPLTDEEGNETGEYAIVSADESLKALAFKIMDDRFGALTFVRIYSGRLKKGDTILNSATGKTERIGRMCEMLANDRIEIESAEAGDIIAIVGMKNVQTGHTLCDVKYPCTLEAMVFPEPVISIAVAPKDKGGSEKMAIAIGKMIAEDPSFRVETDEDSGETILKGMGELHLDIKVDILKRTYGVELIVGEPQVAYRETITQMVEDQYTHKKQSGGSGQFGKIEYIIRPGEPNSGFVFKSSVVGGNVPKEYWPAVEKGFASMMNTGTIAGFPVLDVEFELTDGAYHAVDSSAIAFEIAAKAAFRQSIAKAKPQLLEPIMKVDVFSPDDNVGDVIGDLNRRRGMIKDQVAGVTGVRVKADVPLSEMFGYIGTLRTMTSGRGQFSMEFSHYSPCPNSVADKVVEQVKERKAAEAKK</sequence>
<accession>Q0HMD9</accession>
<evidence type="ECO:0000255" key="1">
    <source>
        <dbReference type="HAMAP-Rule" id="MF_00054"/>
    </source>
</evidence>
<keyword id="KW-0963">Cytoplasm</keyword>
<keyword id="KW-0251">Elongation factor</keyword>
<keyword id="KW-0342">GTP-binding</keyword>
<keyword id="KW-0547">Nucleotide-binding</keyword>
<keyword id="KW-0648">Protein biosynthesis</keyword>
<reference key="1">
    <citation type="submission" date="2006-08" db="EMBL/GenBank/DDBJ databases">
        <title>Complete sequence of Shewanella sp. MR-4.</title>
        <authorList>
            <consortium name="US DOE Joint Genome Institute"/>
            <person name="Copeland A."/>
            <person name="Lucas S."/>
            <person name="Lapidus A."/>
            <person name="Barry K."/>
            <person name="Detter J.C."/>
            <person name="Glavina del Rio T."/>
            <person name="Hammon N."/>
            <person name="Israni S."/>
            <person name="Dalin E."/>
            <person name="Tice H."/>
            <person name="Pitluck S."/>
            <person name="Kiss H."/>
            <person name="Brettin T."/>
            <person name="Bruce D."/>
            <person name="Han C."/>
            <person name="Tapia R."/>
            <person name="Gilna P."/>
            <person name="Schmutz J."/>
            <person name="Larimer F."/>
            <person name="Land M."/>
            <person name="Hauser L."/>
            <person name="Kyrpides N."/>
            <person name="Mikhailova N."/>
            <person name="Nealson K."/>
            <person name="Konstantinidis K."/>
            <person name="Klappenbach J."/>
            <person name="Tiedje J."/>
            <person name="Richardson P."/>
        </authorList>
    </citation>
    <scope>NUCLEOTIDE SEQUENCE [LARGE SCALE GENOMIC DNA]</scope>
    <source>
        <strain>MR-4</strain>
    </source>
</reference>
<protein>
    <recommendedName>
        <fullName evidence="1">Elongation factor G 2</fullName>
        <shortName evidence="1">EF-G 2</shortName>
    </recommendedName>
</protein>
<comment type="function">
    <text evidence="1">Catalyzes the GTP-dependent ribosomal translocation step during translation elongation. During this step, the ribosome changes from the pre-translocational (PRE) to the post-translocational (POST) state as the newly formed A-site-bound peptidyl-tRNA and P-site-bound deacylated tRNA move to the P and E sites, respectively. Catalyzes the coordinated movement of the two tRNA molecules, the mRNA and conformational changes in the ribosome.</text>
</comment>
<comment type="subcellular location">
    <subcellularLocation>
        <location evidence="1">Cytoplasm</location>
    </subcellularLocation>
</comment>
<comment type="similarity">
    <text evidence="1">Belongs to the TRAFAC class translation factor GTPase superfamily. Classic translation factor GTPase family. EF-G/EF-2 subfamily.</text>
</comment>